<protein>
    <recommendedName>
        <fullName evidence="3">Conotoxin Sr5.4</fullName>
    </recommendedName>
</protein>
<organism>
    <name type="scientific">Conus spurius</name>
    <name type="common">Alphabet cone</name>
    <dbReference type="NCBI Taxonomy" id="192919"/>
    <lineage>
        <taxon>Eukaryota</taxon>
        <taxon>Metazoa</taxon>
        <taxon>Spiralia</taxon>
        <taxon>Lophotrochozoa</taxon>
        <taxon>Mollusca</taxon>
        <taxon>Gastropoda</taxon>
        <taxon>Caenogastropoda</taxon>
        <taxon>Neogastropoda</taxon>
        <taxon>Conoidea</taxon>
        <taxon>Conidae</taxon>
        <taxon>Conus</taxon>
        <taxon>Lindaconus</taxon>
    </lineage>
</organism>
<sequence>MRCLPVFVILLLLIASAPSVDAQLKTKDDVPLASFHDNAKGTQHKRIINWCCLVFYQCC</sequence>
<feature type="signal peptide" evidence="2">
    <location>
        <begin position="1"/>
        <end position="22"/>
    </location>
</feature>
<feature type="propeptide" id="PRO_0000392715" evidence="1">
    <location>
        <begin position="23"/>
        <end position="44"/>
    </location>
</feature>
<feature type="peptide" id="PRO_0000392716" description="Conotoxin Sr5.4">
    <location>
        <begin position="47"/>
        <end position="59"/>
    </location>
</feature>
<proteinExistence type="inferred from homology"/>
<name>CT54_CONSP</name>
<dbReference type="EMBL" id="FJ646605">
    <property type="protein sequence ID" value="ACN22843.1"/>
    <property type="molecule type" value="mRNA"/>
</dbReference>
<dbReference type="ConoServer" id="3698">
    <property type="toxin name" value="Sr5.4 precursor"/>
</dbReference>
<dbReference type="GO" id="GO:0005576">
    <property type="term" value="C:extracellular region"/>
    <property type="evidence" value="ECO:0007669"/>
    <property type="project" value="UniProtKB-SubCell"/>
</dbReference>
<dbReference type="GO" id="GO:0090729">
    <property type="term" value="F:toxin activity"/>
    <property type="evidence" value="ECO:0007669"/>
    <property type="project" value="UniProtKB-KW"/>
</dbReference>
<dbReference type="InterPro" id="IPR031565">
    <property type="entry name" value="T-conotoxin"/>
</dbReference>
<dbReference type="Pfam" id="PF16981">
    <property type="entry name" value="Chi-conotoxin"/>
    <property type="match status" value="1"/>
</dbReference>
<keyword id="KW-0165">Cleavage on pair of basic residues</keyword>
<keyword id="KW-1015">Disulfide bond</keyword>
<keyword id="KW-0964">Secreted</keyword>
<keyword id="KW-0732">Signal</keyword>
<keyword id="KW-0800">Toxin</keyword>
<evidence type="ECO:0000250" key="1"/>
<evidence type="ECO:0000255" key="2"/>
<evidence type="ECO:0000303" key="3">
    <source>
    </source>
</evidence>
<evidence type="ECO:0000305" key="4"/>
<evidence type="ECO:0000305" key="5">
    <source>
    </source>
</evidence>
<reference key="1">
    <citation type="journal article" date="2009" name="Peptides">
        <title>Identification, by RT-PCR, of four novel T-1-superfamily conotoxins from the vermivorous snail Conus spurius from the Gulf of Mexico.</title>
        <authorList>
            <person name="Zamora-Bustillos R."/>
            <person name="Aguilar M.B."/>
            <person name="Falcon A."/>
            <person name="Heimer de la Cotera E.P."/>
        </authorList>
    </citation>
    <scope>NUCLEOTIDE SEQUENCE [MRNA]</scope>
    <source>
        <tissue>Venom duct</tissue>
    </source>
</reference>
<comment type="subcellular location">
    <subcellularLocation>
        <location evidence="5">Secreted</location>
    </subcellularLocation>
</comment>
<comment type="tissue specificity">
    <text evidence="5">Expressed by the venom duct.</text>
</comment>
<comment type="domain">
    <text evidence="4">The cysteine framework is V (CC-CC).</text>
</comment>
<comment type="PTM">
    <text evidence="4">Contains 2 disulfide bonds that can be either 'C1-C3, C2-C4' or 'C1-C4, C2-C3', since these disulfide connectivities have been observed for conotoxins with cysteine framework V (for examples, see AC P0DQQ7 and AC P81755).</text>
</comment>
<comment type="similarity">
    <text evidence="4">Belongs to the conotoxin T superfamily.</text>
</comment>
<accession>C0KYC3</accession>